<dbReference type="EC" id="2.3.1.275" evidence="1"/>
<dbReference type="EMBL" id="AE016853">
    <property type="protein sequence ID" value="AAO54083.1"/>
    <property type="molecule type" value="Genomic_DNA"/>
</dbReference>
<dbReference type="RefSeq" id="NP_790388.1">
    <property type="nucleotide sequence ID" value="NC_004578.1"/>
</dbReference>
<dbReference type="SMR" id="Q88A56"/>
<dbReference type="STRING" id="223283.PSPTO_0541"/>
<dbReference type="KEGG" id="pst:PSPTO_0541"/>
<dbReference type="PATRIC" id="fig|223283.9.peg.551"/>
<dbReference type="eggNOG" id="COG0344">
    <property type="taxonomic scope" value="Bacteria"/>
</dbReference>
<dbReference type="HOGENOM" id="CLU_081254_0_0_6"/>
<dbReference type="OrthoDB" id="9777124at2"/>
<dbReference type="PhylomeDB" id="Q88A56"/>
<dbReference type="UniPathway" id="UPA00085"/>
<dbReference type="Proteomes" id="UP000002515">
    <property type="component" value="Chromosome"/>
</dbReference>
<dbReference type="GO" id="GO:0005886">
    <property type="term" value="C:plasma membrane"/>
    <property type="evidence" value="ECO:0007669"/>
    <property type="project" value="UniProtKB-SubCell"/>
</dbReference>
<dbReference type="GO" id="GO:0043772">
    <property type="term" value="F:acyl-phosphate glycerol-3-phosphate acyltransferase activity"/>
    <property type="evidence" value="ECO:0007669"/>
    <property type="project" value="UniProtKB-UniRule"/>
</dbReference>
<dbReference type="GO" id="GO:0008654">
    <property type="term" value="P:phospholipid biosynthetic process"/>
    <property type="evidence" value="ECO:0007669"/>
    <property type="project" value="UniProtKB-UniRule"/>
</dbReference>
<dbReference type="HAMAP" id="MF_01043">
    <property type="entry name" value="PlsY"/>
    <property type="match status" value="1"/>
</dbReference>
<dbReference type="InterPro" id="IPR003811">
    <property type="entry name" value="G3P_acylTferase_PlsY"/>
</dbReference>
<dbReference type="NCBIfam" id="TIGR00023">
    <property type="entry name" value="glycerol-3-phosphate 1-O-acyltransferase PlsY"/>
    <property type="match status" value="1"/>
</dbReference>
<dbReference type="PANTHER" id="PTHR30309:SF0">
    <property type="entry name" value="GLYCEROL-3-PHOSPHATE ACYLTRANSFERASE-RELATED"/>
    <property type="match status" value="1"/>
</dbReference>
<dbReference type="PANTHER" id="PTHR30309">
    <property type="entry name" value="INNER MEMBRANE PROTEIN YGIH"/>
    <property type="match status" value="1"/>
</dbReference>
<dbReference type="Pfam" id="PF02660">
    <property type="entry name" value="G3P_acyltransf"/>
    <property type="match status" value="1"/>
</dbReference>
<dbReference type="SMART" id="SM01207">
    <property type="entry name" value="G3P_acyltransf"/>
    <property type="match status" value="1"/>
</dbReference>
<keyword id="KW-0997">Cell inner membrane</keyword>
<keyword id="KW-1003">Cell membrane</keyword>
<keyword id="KW-0444">Lipid biosynthesis</keyword>
<keyword id="KW-0443">Lipid metabolism</keyword>
<keyword id="KW-0472">Membrane</keyword>
<keyword id="KW-0594">Phospholipid biosynthesis</keyword>
<keyword id="KW-1208">Phospholipid metabolism</keyword>
<keyword id="KW-1185">Reference proteome</keyword>
<keyword id="KW-0808">Transferase</keyword>
<keyword id="KW-0812">Transmembrane</keyword>
<keyword id="KW-1133">Transmembrane helix</keyword>
<feature type="chain" id="PRO_0000188433" description="Glycerol-3-phosphate acyltransferase">
    <location>
        <begin position="1"/>
        <end position="192"/>
    </location>
</feature>
<feature type="transmembrane region" description="Helical" evidence="1">
    <location>
        <begin position="4"/>
        <end position="24"/>
    </location>
</feature>
<feature type="transmembrane region" description="Helical" evidence="1">
    <location>
        <begin position="54"/>
        <end position="74"/>
    </location>
</feature>
<feature type="transmembrane region" description="Helical" evidence="1">
    <location>
        <begin position="80"/>
        <end position="100"/>
    </location>
</feature>
<feature type="transmembrane region" description="Helical" evidence="1">
    <location>
        <begin position="112"/>
        <end position="132"/>
    </location>
</feature>
<feature type="transmembrane region" description="Helical" evidence="1">
    <location>
        <begin position="154"/>
        <end position="174"/>
    </location>
</feature>
<gene>
    <name evidence="1" type="primary">plsY</name>
    <name type="ordered locus">PSPTO_0541</name>
</gene>
<organism>
    <name type="scientific">Pseudomonas syringae pv. tomato (strain ATCC BAA-871 / DC3000)</name>
    <dbReference type="NCBI Taxonomy" id="223283"/>
    <lineage>
        <taxon>Bacteria</taxon>
        <taxon>Pseudomonadati</taxon>
        <taxon>Pseudomonadota</taxon>
        <taxon>Gammaproteobacteria</taxon>
        <taxon>Pseudomonadales</taxon>
        <taxon>Pseudomonadaceae</taxon>
        <taxon>Pseudomonas</taxon>
    </lineage>
</organism>
<accession>Q88A56</accession>
<name>PLSY_PSESM</name>
<proteinExistence type="inferred from homology"/>
<comment type="function">
    <text evidence="1">Catalyzes the transfer of an acyl group from acyl-phosphate (acyl-PO(4)) to glycerol-3-phosphate (G3P) to form lysophosphatidic acid (LPA). This enzyme utilizes acyl-phosphate as fatty acyl donor, but not acyl-CoA or acyl-ACP.</text>
</comment>
<comment type="catalytic activity">
    <reaction evidence="1">
        <text>an acyl phosphate + sn-glycerol 3-phosphate = a 1-acyl-sn-glycero-3-phosphate + phosphate</text>
        <dbReference type="Rhea" id="RHEA:34075"/>
        <dbReference type="ChEBI" id="CHEBI:43474"/>
        <dbReference type="ChEBI" id="CHEBI:57597"/>
        <dbReference type="ChEBI" id="CHEBI:57970"/>
        <dbReference type="ChEBI" id="CHEBI:59918"/>
        <dbReference type="EC" id="2.3.1.275"/>
    </reaction>
</comment>
<comment type="pathway">
    <text evidence="1">Lipid metabolism; phospholipid metabolism.</text>
</comment>
<comment type="subunit">
    <text evidence="1">Probably interacts with PlsX.</text>
</comment>
<comment type="subcellular location">
    <subcellularLocation>
        <location evidence="1">Cell inner membrane</location>
        <topology evidence="1">Multi-pass membrane protein</topology>
    </subcellularLocation>
</comment>
<comment type="similarity">
    <text evidence="1">Belongs to the PlsY family.</text>
</comment>
<reference key="1">
    <citation type="journal article" date="2003" name="Proc. Natl. Acad. Sci. U.S.A.">
        <title>The complete genome sequence of the Arabidopsis and tomato pathogen Pseudomonas syringae pv. tomato DC3000.</title>
        <authorList>
            <person name="Buell C.R."/>
            <person name="Joardar V."/>
            <person name="Lindeberg M."/>
            <person name="Selengut J."/>
            <person name="Paulsen I.T."/>
            <person name="Gwinn M.L."/>
            <person name="Dodson R.J."/>
            <person name="DeBoy R.T."/>
            <person name="Durkin A.S."/>
            <person name="Kolonay J.F."/>
            <person name="Madupu R."/>
            <person name="Daugherty S.C."/>
            <person name="Brinkac L.M."/>
            <person name="Beanan M.J."/>
            <person name="Haft D.H."/>
            <person name="Nelson W.C."/>
            <person name="Davidsen T.M."/>
            <person name="Zafar N."/>
            <person name="Zhou L."/>
            <person name="Liu J."/>
            <person name="Yuan Q."/>
            <person name="Khouri H.M."/>
            <person name="Fedorova N.B."/>
            <person name="Tran B."/>
            <person name="Russell D."/>
            <person name="Berry K.J."/>
            <person name="Utterback T.R."/>
            <person name="Van Aken S.E."/>
            <person name="Feldblyum T.V."/>
            <person name="D'Ascenzo M."/>
            <person name="Deng W.-L."/>
            <person name="Ramos A.R."/>
            <person name="Alfano J.R."/>
            <person name="Cartinhour S."/>
            <person name="Chatterjee A.K."/>
            <person name="Delaney T.P."/>
            <person name="Lazarowitz S.G."/>
            <person name="Martin G.B."/>
            <person name="Schneider D.J."/>
            <person name="Tang X."/>
            <person name="Bender C.L."/>
            <person name="White O."/>
            <person name="Fraser C.M."/>
            <person name="Collmer A."/>
        </authorList>
    </citation>
    <scope>NUCLEOTIDE SEQUENCE [LARGE SCALE GENOMIC DNA]</scope>
    <source>
        <strain>ATCC BAA-871 / DC3000</strain>
    </source>
</reference>
<evidence type="ECO:0000255" key="1">
    <source>
        <dbReference type="HAMAP-Rule" id="MF_01043"/>
    </source>
</evidence>
<protein>
    <recommendedName>
        <fullName evidence="1">Glycerol-3-phosphate acyltransferase</fullName>
    </recommendedName>
    <alternativeName>
        <fullName evidence="1">Acyl-PO4 G3P acyltransferase</fullName>
    </alternativeName>
    <alternativeName>
        <fullName evidence="1">Acyl-phosphate--glycerol-3-phosphate acyltransferase</fullName>
    </alternativeName>
    <alternativeName>
        <fullName evidence="1">G3P acyltransferase</fullName>
        <shortName evidence="1">GPAT</shortName>
        <ecNumber evidence="1">2.3.1.275</ecNumber>
    </alternativeName>
    <alternativeName>
        <fullName evidence="1">Lysophosphatidic acid synthase</fullName>
        <shortName evidence="1">LPA synthase</shortName>
    </alternativeName>
</protein>
<sequence>MVSMFWLLATFAYLLGSLSFAILLSRLSGSPDPRASGSGNAGATNMLRLAGKKLAVLTLLGDLCKGLIPVVLAGAWGLDPSQQGWIGVCAVLGHLFPLYFRFRGGKGVATAAGVLLGLYPPAAALAIAAWLLTLYLTRTSSLAALIATPLTLPLLAWQEPHALLPMSVLTLLIVWRHRGNLRDLLAGRERHF</sequence>